<gene>
    <name evidence="1" type="primary">glpK</name>
    <name type="ordered locus">TTE2002</name>
</gene>
<reference key="1">
    <citation type="journal article" date="2002" name="Genome Res.">
        <title>A complete sequence of the T. tengcongensis genome.</title>
        <authorList>
            <person name="Bao Q."/>
            <person name="Tian Y."/>
            <person name="Li W."/>
            <person name="Xu Z."/>
            <person name="Xuan Z."/>
            <person name="Hu S."/>
            <person name="Dong W."/>
            <person name="Yang J."/>
            <person name="Chen Y."/>
            <person name="Xue Y."/>
            <person name="Xu Y."/>
            <person name="Lai X."/>
            <person name="Huang L."/>
            <person name="Dong X."/>
            <person name="Ma Y."/>
            <person name="Ling L."/>
            <person name="Tan H."/>
            <person name="Chen R."/>
            <person name="Wang J."/>
            <person name="Yu J."/>
            <person name="Yang H."/>
        </authorList>
    </citation>
    <scope>NUCLEOTIDE SEQUENCE [LARGE SCALE GENOMIC DNA]</scope>
    <source>
        <strain>DSM 15242 / JCM 11007 / NBRC 100824 / MB4</strain>
    </source>
</reference>
<feature type="chain" id="PRO_0000059517" description="Glycerol kinase">
    <location>
        <begin position="1"/>
        <end position="497"/>
    </location>
</feature>
<feature type="binding site" evidence="1">
    <location>
        <position position="12"/>
    </location>
    <ligand>
        <name>ADP</name>
        <dbReference type="ChEBI" id="CHEBI:456216"/>
    </ligand>
</feature>
<feature type="binding site" evidence="1">
    <location>
        <position position="12"/>
    </location>
    <ligand>
        <name>ATP</name>
        <dbReference type="ChEBI" id="CHEBI:30616"/>
    </ligand>
</feature>
<feature type="binding site" evidence="1">
    <location>
        <position position="12"/>
    </location>
    <ligand>
        <name>sn-glycerol 3-phosphate</name>
        <dbReference type="ChEBI" id="CHEBI:57597"/>
    </ligand>
</feature>
<feature type="binding site" evidence="1">
    <location>
        <position position="13"/>
    </location>
    <ligand>
        <name>ATP</name>
        <dbReference type="ChEBI" id="CHEBI:30616"/>
    </ligand>
</feature>
<feature type="binding site" evidence="1">
    <location>
        <position position="14"/>
    </location>
    <ligand>
        <name>ATP</name>
        <dbReference type="ChEBI" id="CHEBI:30616"/>
    </ligand>
</feature>
<feature type="binding site" evidence="1">
    <location>
        <position position="16"/>
    </location>
    <ligand>
        <name>ADP</name>
        <dbReference type="ChEBI" id="CHEBI:456216"/>
    </ligand>
</feature>
<feature type="binding site" evidence="1">
    <location>
        <position position="82"/>
    </location>
    <ligand>
        <name>glycerol</name>
        <dbReference type="ChEBI" id="CHEBI:17754"/>
    </ligand>
</feature>
<feature type="binding site" evidence="1">
    <location>
        <position position="82"/>
    </location>
    <ligand>
        <name>sn-glycerol 3-phosphate</name>
        <dbReference type="ChEBI" id="CHEBI:57597"/>
    </ligand>
</feature>
<feature type="binding site" evidence="1">
    <location>
        <position position="83"/>
    </location>
    <ligand>
        <name>glycerol</name>
        <dbReference type="ChEBI" id="CHEBI:17754"/>
    </ligand>
</feature>
<feature type="binding site" evidence="1">
    <location>
        <position position="83"/>
    </location>
    <ligand>
        <name>sn-glycerol 3-phosphate</name>
        <dbReference type="ChEBI" id="CHEBI:57597"/>
    </ligand>
</feature>
<feature type="binding site" evidence="1">
    <location>
        <position position="134"/>
    </location>
    <ligand>
        <name>glycerol</name>
        <dbReference type="ChEBI" id="CHEBI:17754"/>
    </ligand>
</feature>
<feature type="binding site" evidence="1">
    <location>
        <position position="134"/>
    </location>
    <ligand>
        <name>sn-glycerol 3-phosphate</name>
        <dbReference type="ChEBI" id="CHEBI:57597"/>
    </ligand>
</feature>
<feature type="binding site" evidence="1">
    <location>
        <position position="243"/>
    </location>
    <ligand>
        <name>glycerol</name>
        <dbReference type="ChEBI" id="CHEBI:17754"/>
    </ligand>
</feature>
<feature type="binding site" evidence="1">
    <location>
        <position position="243"/>
    </location>
    <ligand>
        <name>sn-glycerol 3-phosphate</name>
        <dbReference type="ChEBI" id="CHEBI:57597"/>
    </ligand>
</feature>
<feature type="binding site" evidence="1">
    <location>
        <position position="244"/>
    </location>
    <ligand>
        <name>glycerol</name>
        <dbReference type="ChEBI" id="CHEBI:17754"/>
    </ligand>
</feature>
<feature type="binding site" evidence="1">
    <location>
        <position position="265"/>
    </location>
    <ligand>
        <name>ADP</name>
        <dbReference type="ChEBI" id="CHEBI:456216"/>
    </ligand>
</feature>
<feature type="binding site" evidence="1">
    <location>
        <position position="265"/>
    </location>
    <ligand>
        <name>ATP</name>
        <dbReference type="ChEBI" id="CHEBI:30616"/>
    </ligand>
</feature>
<feature type="binding site" evidence="1">
    <location>
        <position position="308"/>
    </location>
    <ligand>
        <name>ADP</name>
        <dbReference type="ChEBI" id="CHEBI:456216"/>
    </ligand>
</feature>
<feature type="binding site" evidence="1">
    <location>
        <position position="308"/>
    </location>
    <ligand>
        <name>ATP</name>
        <dbReference type="ChEBI" id="CHEBI:30616"/>
    </ligand>
</feature>
<feature type="binding site" evidence="1">
    <location>
        <position position="312"/>
    </location>
    <ligand>
        <name>ATP</name>
        <dbReference type="ChEBI" id="CHEBI:30616"/>
    </ligand>
</feature>
<feature type="binding site" evidence="1">
    <location>
        <position position="409"/>
    </location>
    <ligand>
        <name>ADP</name>
        <dbReference type="ChEBI" id="CHEBI:456216"/>
    </ligand>
</feature>
<feature type="binding site" evidence="1">
    <location>
        <position position="409"/>
    </location>
    <ligand>
        <name>ATP</name>
        <dbReference type="ChEBI" id="CHEBI:30616"/>
    </ligand>
</feature>
<feature type="binding site" evidence="1">
    <location>
        <position position="413"/>
    </location>
    <ligand>
        <name>ADP</name>
        <dbReference type="ChEBI" id="CHEBI:456216"/>
    </ligand>
</feature>
<dbReference type="EC" id="2.7.1.30" evidence="1"/>
<dbReference type="EMBL" id="AE008691">
    <property type="protein sequence ID" value="AAM25180.1"/>
    <property type="molecule type" value="Genomic_DNA"/>
</dbReference>
<dbReference type="RefSeq" id="WP_009610750.1">
    <property type="nucleotide sequence ID" value="NC_003869.1"/>
</dbReference>
<dbReference type="SMR" id="Q8R8J4"/>
<dbReference type="STRING" id="273068.TTE2002"/>
<dbReference type="KEGG" id="tte:TTE2002"/>
<dbReference type="eggNOG" id="COG0554">
    <property type="taxonomic scope" value="Bacteria"/>
</dbReference>
<dbReference type="HOGENOM" id="CLU_009281_2_3_9"/>
<dbReference type="OrthoDB" id="9805576at2"/>
<dbReference type="UniPathway" id="UPA00618">
    <property type="reaction ID" value="UER00672"/>
</dbReference>
<dbReference type="Proteomes" id="UP000000555">
    <property type="component" value="Chromosome"/>
</dbReference>
<dbReference type="GO" id="GO:0005829">
    <property type="term" value="C:cytosol"/>
    <property type="evidence" value="ECO:0007669"/>
    <property type="project" value="TreeGrafter"/>
</dbReference>
<dbReference type="GO" id="GO:0005524">
    <property type="term" value="F:ATP binding"/>
    <property type="evidence" value="ECO:0007669"/>
    <property type="project" value="UniProtKB-UniRule"/>
</dbReference>
<dbReference type="GO" id="GO:0004370">
    <property type="term" value="F:glycerol kinase activity"/>
    <property type="evidence" value="ECO:0000250"/>
    <property type="project" value="UniProtKB"/>
</dbReference>
<dbReference type="GO" id="GO:0019563">
    <property type="term" value="P:glycerol catabolic process"/>
    <property type="evidence" value="ECO:0007669"/>
    <property type="project" value="UniProtKB-UniRule"/>
</dbReference>
<dbReference type="GO" id="GO:0006071">
    <property type="term" value="P:glycerol metabolic process"/>
    <property type="evidence" value="ECO:0000250"/>
    <property type="project" value="UniProtKB"/>
</dbReference>
<dbReference type="GO" id="GO:0006072">
    <property type="term" value="P:glycerol-3-phosphate metabolic process"/>
    <property type="evidence" value="ECO:0007669"/>
    <property type="project" value="InterPro"/>
</dbReference>
<dbReference type="CDD" id="cd07786">
    <property type="entry name" value="FGGY_EcGK_like"/>
    <property type="match status" value="1"/>
</dbReference>
<dbReference type="FunFam" id="3.30.420.40:FF:000007">
    <property type="entry name" value="Glycerol kinase"/>
    <property type="match status" value="1"/>
</dbReference>
<dbReference type="FunFam" id="3.30.420.40:FF:000008">
    <property type="entry name" value="Glycerol kinase"/>
    <property type="match status" value="1"/>
</dbReference>
<dbReference type="Gene3D" id="3.30.420.40">
    <property type="match status" value="2"/>
</dbReference>
<dbReference type="HAMAP" id="MF_00186">
    <property type="entry name" value="Glycerol_kin"/>
    <property type="match status" value="1"/>
</dbReference>
<dbReference type="InterPro" id="IPR043129">
    <property type="entry name" value="ATPase_NBD"/>
</dbReference>
<dbReference type="InterPro" id="IPR000577">
    <property type="entry name" value="Carb_kinase_FGGY"/>
</dbReference>
<dbReference type="InterPro" id="IPR018483">
    <property type="entry name" value="Carb_kinase_FGGY_CS"/>
</dbReference>
<dbReference type="InterPro" id="IPR018485">
    <property type="entry name" value="FGGY_C"/>
</dbReference>
<dbReference type="InterPro" id="IPR018484">
    <property type="entry name" value="FGGY_N"/>
</dbReference>
<dbReference type="InterPro" id="IPR005999">
    <property type="entry name" value="Glycerol_kin"/>
</dbReference>
<dbReference type="NCBIfam" id="TIGR01311">
    <property type="entry name" value="glycerol_kin"/>
    <property type="match status" value="1"/>
</dbReference>
<dbReference type="NCBIfam" id="NF000756">
    <property type="entry name" value="PRK00047.1"/>
    <property type="match status" value="1"/>
</dbReference>
<dbReference type="PANTHER" id="PTHR10196:SF69">
    <property type="entry name" value="GLYCEROL KINASE"/>
    <property type="match status" value="1"/>
</dbReference>
<dbReference type="PANTHER" id="PTHR10196">
    <property type="entry name" value="SUGAR KINASE"/>
    <property type="match status" value="1"/>
</dbReference>
<dbReference type="Pfam" id="PF02782">
    <property type="entry name" value="FGGY_C"/>
    <property type="match status" value="1"/>
</dbReference>
<dbReference type="Pfam" id="PF00370">
    <property type="entry name" value="FGGY_N"/>
    <property type="match status" value="1"/>
</dbReference>
<dbReference type="PIRSF" id="PIRSF000538">
    <property type="entry name" value="GlpK"/>
    <property type="match status" value="1"/>
</dbReference>
<dbReference type="SUPFAM" id="SSF53067">
    <property type="entry name" value="Actin-like ATPase domain"/>
    <property type="match status" value="2"/>
</dbReference>
<dbReference type="PROSITE" id="PS00933">
    <property type="entry name" value="FGGY_KINASES_1"/>
    <property type="match status" value="1"/>
</dbReference>
<dbReference type="PROSITE" id="PS00445">
    <property type="entry name" value="FGGY_KINASES_2"/>
    <property type="match status" value="1"/>
</dbReference>
<comment type="function">
    <text evidence="1">Key enzyme in the regulation of glycerol uptake and metabolism. Catalyzes the phosphorylation of glycerol to yield sn-glycerol 3-phosphate.</text>
</comment>
<comment type="catalytic activity">
    <reaction evidence="1">
        <text>glycerol + ATP = sn-glycerol 3-phosphate + ADP + H(+)</text>
        <dbReference type="Rhea" id="RHEA:21644"/>
        <dbReference type="ChEBI" id="CHEBI:15378"/>
        <dbReference type="ChEBI" id="CHEBI:17754"/>
        <dbReference type="ChEBI" id="CHEBI:30616"/>
        <dbReference type="ChEBI" id="CHEBI:57597"/>
        <dbReference type="ChEBI" id="CHEBI:456216"/>
        <dbReference type="EC" id="2.7.1.30"/>
    </reaction>
</comment>
<comment type="activity regulation">
    <text evidence="1">Activated by phosphorylation and inhibited by fructose 1,6-bisphosphate (FBP).</text>
</comment>
<comment type="pathway">
    <text evidence="1">Polyol metabolism; glycerol degradation via glycerol kinase pathway; sn-glycerol 3-phosphate from glycerol: step 1/1.</text>
</comment>
<comment type="subunit">
    <text evidence="1">Homotetramer and homodimer (in equilibrium).</text>
</comment>
<comment type="similarity">
    <text evidence="1">Belongs to the FGGY kinase family.</text>
</comment>
<organism>
    <name type="scientific">Caldanaerobacter subterraneus subsp. tengcongensis (strain DSM 15242 / JCM 11007 / NBRC 100824 / MB4)</name>
    <name type="common">Thermoanaerobacter tengcongensis</name>
    <dbReference type="NCBI Taxonomy" id="273068"/>
    <lineage>
        <taxon>Bacteria</taxon>
        <taxon>Bacillati</taxon>
        <taxon>Bacillota</taxon>
        <taxon>Clostridia</taxon>
        <taxon>Thermoanaerobacterales</taxon>
        <taxon>Thermoanaerobacteraceae</taxon>
        <taxon>Caldanaerobacter</taxon>
    </lineage>
</organism>
<sequence length="497" mass="55760">MAKYVMALDQGTTSSRAIIFDHSGKMIASLNKEFRQIYPKPGWVEHDPMEIWESQIEVAKGVIEKAGIKPEDIAAIGITNQRETTVVWDKNTGKPIYNAIVWQCRRTAPICDDLKNKGFDKKIREKTGLVVDAYFSGTKVKWILDNVEGAREKAERGELLFGNIDTWLIWNLTRGKVHVTDYSNASRTMLFNIHELKWDKEILEELNVPENMLPEVKPSSHVYGYTDKSIFGVEIPIAGDAGDQQAALFGQACFKPGMAKNTYGTGCFMLMNTGEKAVPSKTGLLTTIAWGIDGKVEYALEGSIFITGAAIQWLRDELRIIDNAPQSEEYALKVEDTNGVYVVPAFVGLGAPYWDMYARGVIVGLTRGAKREHIIRATLESIAYQTRDVLEAMQEDSGIKLQALKVDGGASANNFLMQFQADILGVPVDRPQVIETTALGAAYLAGLAVGFWNSREEIEKNWNIDRRFEPAMEEEKREKLYRGWKKAVERAMKWAEE</sequence>
<name>GLPK_CALS4</name>
<proteinExistence type="inferred from homology"/>
<keyword id="KW-0067">ATP-binding</keyword>
<keyword id="KW-0319">Glycerol metabolism</keyword>
<keyword id="KW-0418">Kinase</keyword>
<keyword id="KW-0547">Nucleotide-binding</keyword>
<keyword id="KW-1185">Reference proteome</keyword>
<keyword id="KW-0808">Transferase</keyword>
<accession>Q8R8J4</accession>
<protein>
    <recommendedName>
        <fullName evidence="1">Glycerol kinase</fullName>
        <ecNumber evidence="1">2.7.1.30</ecNumber>
    </recommendedName>
    <alternativeName>
        <fullName evidence="1">ATP:glycerol 3-phosphotransferase</fullName>
    </alternativeName>
    <alternativeName>
        <fullName evidence="1">Glycerokinase</fullName>
        <shortName evidence="1">GK</shortName>
    </alternativeName>
</protein>
<evidence type="ECO:0000255" key="1">
    <source>
        <dbReference type="HAMAP-Rule" id="MF_00186"/>
    </source>
</evidence>